<sequence length="128" mass="14768">MEIGKKYELNPHRIKSFIDISSSNANMVGIIQENGGWFEVKSISSLDGFDYVTEIICANGEIYNDDGMGDDYFELSEEEFYCFREYKEPTSEEDEVKDKVSGVTKIHCIVDENNVDEIIELLRKTFKK</sequence>
<accession>Q38169</accession>
<feature type="chain" id="PRO_0000165190" description="Uncharacterized 14.8 kDa protein in frd-Gp32 intergenic region">
    <location>
        <begin position="1"/>
        <end position="128"/>
    </location>
</feature>
<organismHost>
    <name type="scientific">Escherichia coli</name>
    <dbReference type="NCBI Taxonomy" id="562"/>
</organismHost>
<organism>
    <name type="scientific">Enterobacteria phage T6</name>
    <name type="common">Bacteriophage T6</name>
    <dbReference type="NCBI Taxonomy" id="10666"/>
    <lineage>
        <taxon>Viruses</taxon>
        <taxon>Duplodnaviria</taxon>
        <taxon>Heunggongvirae</taxon>
        <taxon>Uroviricota</taxon>
        <taxon>Caudoviricetes</taxon>
        <taxon>Straboviridae</taxon>
        <taxon>Tevenvirinae</taxon>
        <taxon>Tequatrovirus</taxon>
        <taxon>Tequatrovirus T6</taxon>
    </lineage>
</organism>
<dbReference type="EMBL" id="L46846">
    <property type="protein sequence ID" value="AAA74669.1"/>
    <property type="molecule type" value="Genomic_DNA"/>
</dbReference>
<dbReference type="SMR" id="Q38169"/>
<dbReference type="InterPro" id="IPR004885">
    <property type="entry name" value="FRD2"/>
</dbReference>
<dbReference type="Pfam" id="PF03197">
    <property type="entry name" value="FRD2"/>
    <property type="match status" value="1"/>
</dbReference>
<proteinExistence type="predicted"/>
<protein>
    <recommendedName>
        <fullName>Uncharacterized 14.8 kDa protein in frd-Gp32 intergenic region</fullName>
    </recommendedName>
</protein>
<gene>
    <name type="primary">frd.2</name>
    <name type="synonym">frd2</name>
</gene>
<name>Y14D_BPT6</name>
<reference key="1">
    <citation type="submission" date="1995-08" db="EMBL/GenBank/DDBJ databases">
        <title>DNA sequences of the frd region in T4-related bacteriophages.</title>
        <authorList>
            <person name="Poglazov A.B."/>
            <person name="Porter D."/>
            <person name="Kutter E.M."/>
            <person name="Mesyanzhinov V.V."/>
        </authorList>
    </citation>
    <scope>NUCLEOTIDE SEQUENCE [GENOMIC DNA]</scope>
</reference>